<comment type="function">
    <text evidence="1">Specifically methylates the N4 position of cytidine in position 1402 (C1402) of 16S rRNA.</text>
</comment>
<comment type="catalytic activity">
    <reaction evidence="1">
        <text>cytidine(1402) in 16S rRNA + S-adenosyl-L-methionine = N(4)-methylcytidine(1402) in 16S rRNA + S-adenosyl-L-homocysteine + H(+)</text>
        <dbReference type="Rhea" id="RHEA:42928"/>
        <dbReference type="Rhea" id="RHEA-COMP:10286"/>
        <dbReference type="Rhea" id="RHEA-COMP:10287"/>
        <dbReference type="ChEBI" id="CHEBI:15378"/>
        <dbReference type="ChEBI" id="CHEBI:57856"/>
        <dbReference type="ChEBI" id="CHEBI:59789"/>
        <dbReference type="ChEBI" id="CHEBI:74506"/>
        <dbReference type="ChEBI" id="CHEBI:82748"/>
        <dbReference type="EC" id="2.1.1.199"/>
    </reaction>
</comment>
<comment type="subcellular location">
    <subcellularLocation>
        <location evidence="1">Cytoplasm</location>
    </subcellularLocation>
</comment>
<comment type="similarity">
    <text evidence="1">Belongs to the methyltransferase superfamily. RsmH family.</text>
</comment>
<name>RSMH_SHEDO</name>
<gene>
    <name evidence="1" type="primary">rsmH</name>
    <name type="synonym">mraW</name>
    <name type="ordered locus">Sden_0347</name>
</gene>
<keyword id="KW-0963">Cytoplasm</keyword>
<keyword id="KW-0489">Methyltransferase</keyword>
<keyword id="KW-1185">Reference proteome</keyword>
<keyword id="KW-0698">rRNA processing</keyword>
<keyword id="KW-0949">S-adenosyl-L-methionine</keyword>
<keyword id="KW-0808">Transferase</keyword>
<dbReference type="EC" id="2.1.1.199" evidence="1"/>
<dbReference type="EMBL" id="CP000302">
    <property type="protein sequence ID" value="ABE53642.1"/>
    <property type="molecule type" value="Genomic_DNA"/>
</dbReference>
<dbReference type="RefSeq" id="WP_011494809.1">
    <property type="nucleotide sequence ID" value="NC_007954.1"/>
</dbReference>
<dbReference type="SMR" id="Q12SD4"/>
<dbReference type="STRING" id="318161.Sden_0347"/>
<dbReference type="KEGG" id="sdn:Sden_0347"/>
<dbReference type="eggNOG" id="COG0275">
    <property type="taxonomic scope" value="Bacteria"/>
</dbReference>
<dbReference type="HOGENOM" id="CLU_038422_2_0_6"/>
<dbReference type="OrthoDB" id="9806637at2"/>
<dbReference type="Proteomes" id="UP000001982">
    <property type="component" value="Chromosome"/>
</dbReference>
<dbReference type="GO" id="GO:0005737">
    <property type="term" value="C:cytoplasm"/>
    <property type="evidence" value="ECO:0007669"/>
    <property type="project" value="UniProtKB-SubCell"/>
</dbReference>
<dbReference type="GO" id="GO:0071424">
    <property type="term" value="F:rRNA (cytosine-N4-)-methyltransferase activity"/>
    <property type="evidence" value="ECO:0007669"/>
    <property type="project" value="UniProtKB-UniRule"/>
</dbReference>
<dbReference type="GO" id="GO:0070475">
    <property type="term" value="P:rRNA base methylation"/>
    <property type="evidence" value="ECO:0007669"/>
    <property type="project" value="UniProtKB-UniRule"/>
</dbReference>
<dbReference type="FunFam" id="1.10.150.170:FF:000001">
    <property type="entry name" value="Ribosomal RNA small subunit methyltransferase H"/>
    <property type="match status" value="1"/>
</dbReference>
<dbReference type="Gene3D" id="1.10.150.170">
    <property type="entry name" value="Putative methyltransferase TM0872, insert domain"/>
    <property type="match status" value="1"/>
</dbReference>
<dbReference type="Gene3D" id="3.40.50.150">
    <property type="entry name" value="Vaccinia Virus protein VP39"/>
    <property type="match status" value="1"/>
</dbReference>
<dbReference type="HAMAP" id="MF_01007">
    <property type="entry name" value="16SrRNA_methyltr_H"/>
    <property type="match status" value="1"/>
</dbReference>
<dbReference type="InterPro" id="IPR002903">
    <property type="entry name" value="RsmH"/>
</dbReference>
<dbReference type="InterPro" id="IPR023397">
    <property type="entry name" value="SAM-dep_MeTrfase_MraW_recog"/>
</dbReference>
<dbReference type="InterPro" id="IPR029063">
    <property type="entry name" value="SAM-dependent_MTases_sf"/>
</dbReference>
<dbReference type="NCBIfam" id="TIGR00006">
    <property type="entry name" value="16S rRNA (cytosine(1402)-N(4))-methyltransferase RsmH"/>
    <property type="match status" value="1"/>
</dbReference>
<dbReference type="PANTHER" id="PTHR11265:SF0">
    <property type="entry name" value="12S RRNA N4-METHYLCYTIDINE METHYLTRANSFERASE"/>
    <property type="match status" value="1"/>
</dbReference>
<dbReference type="PANTHER" id="PTHR11265">
    <property type="entry name" value="S-ADENOSYL-METHYLTRANSFERASE MRAW"/>
    <property type="match status" value="1"/>
</dbReference>
<dbReference type="Pfam" id="PF01795">
    <property type="entry name" value="Methyltransf_5"/>
    <property type="match status" value="1"/>
</dbReference>
<dbReference type="PIRSF" id="PIRSF004486">
    <property type="entry name" value="MraW"/>
    <property type="match status" value="1"/>
</dbReference>
<dbReference type="SUPFAM" id="SSF81799">
    <property type="entry name" value="Putative methyltransferase TM0872, insert domain"/>
    <property type="match status" value="1"/>
</dbReference>
<dbReference type="SUPFAM" id="SSF53335">
    <property type="entry name" value="S-adenosyl-L-methionine-dependent methyltransferases"/>
    <property type="match status" value="1"/>
</dbReference>
<sequence>MSQEFAHLSVLLKETVDGLNIQPDGIYIDGTFGRGGHSRHVLSHLGPNGRLIAIDRDPQAIEAAKQFADDPRFQIVHGGFGQLADYVAELGLVGKIDGVLLDLGVSSPQLDDAERGFSFLRDGPLDMRMDNSQGQTAAQWIARAEIEDMAWVFKTYGEEKNSRHIARCIAADREKTPFLRTKDLADLIARITKNKERNKHPATRVFQAIRIYINSELEQIDQALEGAVNVLAPHGRMSIISFHSLEDRMVKRFMRRHSQGESVPHGLPITEAEINKSKKLKTLGKAMKPSEIEVEQNPRARSSVLRVAERLDY</sequence>
<evidence type="ECO:0000255" key="1">
    <source>
        <dbReference type="HAMAP-Rule" id="MF_01007"/>
    </source>
</evidence>
<accession>Q12SD4</accession>
<reference key="1">
    <citation type="submission" date="2006-03" db="EMBL/GenBank/DDBJ databases">
        <title>Complete sequence of Shewanella denitrificans OS217.</title>
        <authorList>
            <consortium name="US DOE Joint Genome Institute"/>
            <person name="Copeland A."/>
            <person name="Lucas S."/>
            <person name="Lapidus A."/>
            <person name="Barry K."/>
            <person name="Detter J.C."/>
            <person name="Glavina del Rio T."/>
            <person name="Hammon N."/>
            <person name="Israni S."/>
            <person name="Dalin E."/>
            <person name="Tice H."/>
            <person name="Pitluck S."/>
            <person name="Brettin T."/>
            <person name="Bruce D."/>
            <person name="Han C."/>
            <person name="Tapia R."/>
            <person name="Gilna P."/>
            <person name="Kiss H."/>
            <person name="Schmutz J."/>
            <person name="Larimer F."/>
            <person name="Land M."/>
            <person name="Hauser L."/>
            <person name="Kyrpides N."/>
            <person name="Lykidis A."/>
            <person name="Richardson P."/>
        </authorList>
    </citation>
    <scope>NUCLEOTIDE SEQUENCE [LARGE SCALE GENOMIC DNA]</scope>
    <source>
        <strain>OS217 / ATCC BAA-1090 / DSM 15013</strain>
    </source>
</reference>
<organism>
    <name type="scientific">Shewanella denitrificans (strain OS217 / ATCC BAA-1090 / DSM 15013)</name>
    <dbReference type="NCBI Taxonomy" id="318161"/>
    <lineage>
        <taxon>Bacteria</taxon>
        <taxon>Pseudomonadati</taxon>
        <taxon>Pseudomonadota</taxon>
        <taxon>Gammaproteobacteria</taxon>
        <taxon>Alteromonadales</taxon>
        <taxon>Shewanellaceae</taxon>
        <taxon>Shewanella</taxon>
    </lineage>
</organism>
<protein>
    <recommendedName>
        <fullName evidence="1">Ribosomal RNA small subunit methyltransferase H</fullName>
        <ecNumber evidence="1">2.1.1.199</ecNumber>
    </recommendedName>
    <alternativeName>
        <fullName evidence="1">16S rRNA m(4)C1402 methyltransferase</fullName>
    </alternativeName>
    <alternativeName>
        <fullName evidence="1">rRNA (cytosine-N(4)-)-methyltransferase RsmH</fullName>
    </alternativeName>
</protein>
<feature type="chain" id="PRO_0000387114" description="Ribosomal RNA small subunit methyltransferase H">
    <location>
        <begin position="1"/>
        <end position="313"/>
    </location>
</feature>
<feature type="binding site" evidence="1">
    <location>
        <begin position="35"/>
        <end position="37"/>
    </location>
    <ligand>
        <name>S-adenosyl-L-methionine</name>
        <dbReference type="ChEBI" id="CHEBI:59789"/>
    </ligand>
</feature>
<feature type="binding site" evidence="1">
    <location>
        <position position="55"/>
    </location>
    <ligand>
        <name>S-adenosyl-L-methionine</name>
        <dbReference type="ChEBI" id="CHEBI:59789"/>
    </ligand>
</feature>
<feature type="binding site" evidence="1">
    <location>
        <position position="80"/>
    </location>
    <ligand>
        <name>S-adenosyl-L-methionine</name>
        <dbReference type="ChEBI" id="CHEBI:59789"/>
    </ligand>
</feature>
<feature type="binding site" evidence="1">
    <location>
        <position position="102"/>
    </location>
    <ligand>
        <name>S-adenosyl-L-methionine</name>
        <dbReference type="ChEBI" id="CHEBI:59789"/>
    </ligand>
</feature>
<feature type="binding site" evidence="1">
    <location>
        <position position="109"/>
    </location>
    <ligand>
        <name>S-adenosyl-L-methionine</name>
        <dbReference type="ChEBI" id="CHEBI:59789"/>
    </ligand>
</feature>
<proteinExistence type="inferred from homology"/>